<protein>
    <recommendedName>
        <fullName evidence="2">Translation initiation factor IF-2</fullName>
    </recommendedName>
</protein>
<sequence length="753" mass="80879">MSEKPRRDTGGTGTGSGRSTGQSTNRTSNQQTGTGRTPTATGAHRQPANQSTGGGRSSSTGGRNTPTNQGNARPAAPANARSGNQPARGNNAPAASRSGGSTPAPVRGGGATPAPARGTNTRNARSQQSRGRPQPEEREREREAVLRRPPTPTTTRPVMRPRGPVALPPVMTVRELSEATGIGAADILKTMLKAGMIANINQQIDYETAALIMTDFGIETVENMPEQMVGIVEDVKEVLRSQPPEEMRPRPPVVTIMGHVDHGKTKLLDAIRSTRVAEGEAGGITQHIGAYQVEVNHRKITFLDTPGHEAFTAMRARGAQVTDIVVLVVAADDGVKPQTEEAIAHVKAAGVPMIVAINKIDLPTANPDRIKQQLAALDVIVEEYGGNVPCVHVSARQKINIDGLLEMILLVADLEDLRANPNAPAVGTIIEAKLDKSRGPVATVLIQNGTLHLEDNVLVGCVAGKIKSMFSDSGKRLRHAEPSTPVEIIGLEGVPQAGDILQVMDDLVLAREIALQRQRQQRAEAMAASARGTSLEELFGKVKQGQVKELNLILKADVQGSLDAIAHLIEQLNQSQNEVQTRIIHRGVGAITEGDVNLALASHAIIIGFNARPDPAARRHAEQHGIDIRFYNIIYQLQDDLKKAMAGMLAPTFKEVVEGYAEVRNIFRLPTREVVAGVYVTDGKITRTGQNVRVLRRGVVIHDGKISSLKRFKDDVREVTAGYECGLIVEGFNDIEIGDALEFYRQEQVAATL</sequence>
<accession>B8GAE2</accession>
<keyword id="KW-0963">Cytoplasm</keyword>
<keyword id="KW-0342">GTP-binding</keyword>
<keyword id="KW-0396">Initiation factor</keyword>
<keyword id="KW-0547">Nucleotide-binding</keyword>
<keyword id="KW-0648">Protein biosynthesis</keyword>
<gene>
    <name evidence="2" type="primary">infB</name>
    <name type="ordered locus">Cagg_3681</name>
</gene>
<organism>
    <name type="scientific">Chloroflexus aggregans (strain MD-66 / DSM 9485)</name>
    <dbReference type="NCBI Taxonomy" id="326427"/>
    <lineage>
        <taxon>Bacteria</taxon>
        <taxon>Bacillati</taxon>
        <taxon>Chloroflexota</taxon>
        <taxon>Chloroflexia</taxon>
        <taxon>Chloroflexales</taxon>
        <taxon>Chloroflexineae</taxon>
        <taxon>Chloroflexaceae</taxon>
        <taxon>Chloroflexus</taxon>
    </lineage>
</organism>
<dbReference type="EMBL" id="CP001337">
    <property type="protein sequence ID" value="ACL26517.1"/>
    <property type="molecule type" value="Genomic_DNA"/>
</dbReference>
<dbReference type="RefSeq" id="WP_015942362.1">
    <property type="nucleotide sequence ID" value="NC_011831.1"/>
</dbReference>
<dbReference type="SMR" id="B8GAE2"/>
<dbReference type="STRING" id="326427.Cagg_3681"/>
<dbReference type="KEGG" id="cag:Cagg_3681"/>
<dbReference type="eggNOG" id="COG0532">
    <property type="taxonomic scope" value="Bacteria"/>
</dbReference>
<dbReference type="HOGENOM" id="CLU_006301_5_1_0"/>
<dbReference type="OrthoDB" id="9811804at2"/>
<dbReference type="Proteomes" id="UP000002508">
    <property type="component" value="Chromosome"/>
</dbReference>
<dbReference type="GO" id="GO:0005829">
    <property type="term" value="C:cytosol"/>
    <property type="evidence" value="ECO:0007669"/>
    <property type="project" value="TreeGrafter"/>
</dbReference>
<dbReference type="GO" id="GO:0005525">
    <property type="term" value="F:GTP binding"/>
    <property type="evidence" value="ECO:0007669"/>
    <property type="project" value="UniProtKB-KW"/>
</dbReference>
<dbReference type="GO" id="GO:0003924">
    <property type="term" value="F:GTPase activity"/>
    <property type="evidence" value="ECO:0007669"/>
    <property type="project" value="UniProtKB-UniRule"/>
</dbReference>
<dbReference type="GO" id="GO:0003743">
    <property type="term" value="F:translation initiation factor activity"/>
    <property type="evidence" value="ECO:0007669"/>
    <property type="project" value="UniProtKB-UniRule"/>
</dbReference>
<dbReference type="CDD" id="cd01887">
    <property type="entry name" value="IF2_eIF5B"/>
    <property type="match status" value="1"/>
</dbReference>
<dbReference type="CDD" id="cd03702">
    <property type="entry name" value="IF2_mtIF2_II"/>
    <property type="match status" value="1"/>
</dbReference>
<dbReference type="CDD" id="cd03692">
    <property type="entry name" value="mtIF2_IVc"/>
    <property type="match status" value="1"/>
</dbReference>
<dbReference type="FunFam" id="2.40.30.10:FF:000008">
    <property type="entry name" value="Translation initiation factor IF-2"/>
    <property type="match status" value="1"/>
</dbReference>
<dbReference type="FunFam" id="2.40.30.10:FF:000054">
    <property type="entry name" value="Translation initiation factor IF-2"/>
    <property type="match status" value="1"/>
</dbReference>
<dbReference type="FunFam" id="3.40.50.10050:FF:000001">
    <property type="entry name" value="Translation initiation factor IF-2"/>
    <property type="match status" value="1"/>
</dbReference>
<dbReference type="FunFam" id="3.40.50.300:FF:000019">
    <property type="entry name" value="Translation initiation factor IF-2"/>
    <property type="match status" value="1"/>
</dbReference>
<dbReference type="Gene3D" id="3.40.50.300">
    <property type="entry name" value="P-loop containing nucleotide triphosphate hydrolases"/>
    <property type="match status" value="1"/>
</dbReference>
<dbReference type="Gene3D" id="2.40.30.10">
    <property type="entry name" value="Translation factors"/>
    <property type="match status" value="2"/>
</dbReference>
<dbReference type="Gene3D" id="3.40.50.10050">
    <property type="entry name" value="Translation initiation factor IF- 2, domain 3"/>
    <property type="match status" value="1"/>
</dbReference>
<dbReference type="HAMAP" id="MF_00100_B">
    <property type="entry name" value="IF_2_B"/>
    <property type="match status" value="1"/>
</dbReference>
<dbReference type="InterPro" id="IPR053905">
    <property type="entry name" value="EF-G-like_DII"/>
</dbReference>
<dbReference type="InterPro" id="IPR004161">
    <property type="entry name" value="EFTu-like_2"/>
</dbReference>
<dbReference type="InterPro" id="IPR044145">
    <property type="entry name" value="IF2_II"/>
</dbReference>
<dbReference type="InterPro" id="IPR006847">
    <property type="entry name" value="IF2_N"/>
</dbReference>
<dbReference type="InterPro" id="IPR027417">
    <property type="entry name" value="P-loop_NTPase"/>
</dbReference>
<dbReference type="InterPro" id="IPR005225">
    <property type="entry name" value="Small_GTP-bd"/>
</dbReference>
<dbReference type="InterPro" id="IPR000795">
    <property type="entry name" value="T_Tr_GTP-bd_dom"/>
</dbReference>
<dbReference type="InterPro" id="IPR000178">
    <property type="entry name" value="TF_IF2_bacterial-like"/>
</dbReference>
<dbReference type="InterPro" id="IPR015760">
    <property type="entry name" value="TIF_IF2"/>
</dbReference>
<dbReference type="InterPro" id="IPR023115">
    <property type="entry name" value="TIF_IF2_dom3"/>
</dbReference>
<dbReference type="InterPro" id="IPR036925">
    <property type="entry name" value="TIF_IF2_dom3_sf"/>
</dbReference>
<dbReference type="InterPro" id="IPR009000">
    <property type="entry name" value="Transl_B-barrel_sf"/>
</dbReference>
<dbReference type="NCBIfam" id="TIGR00487">
    <property type="entry name" value="IF-2"/>
    <property type="match status" value="1"/>
</dbReference>
<dbReference type="NCBIfam" id="TIGR00231">
    <property type="entry name" value="small_GTP"/>
    <property type="match status" value="1"/>
</dbReference>
<dbReference type="PANTHER" id="PTHR43381:SF5">
    <property type="entry name" value="TR-TYPE G DOMAIN-CONTAINING PROTEIN"/>
    <property type="match status" value="1"/>
</dbReference>
<dbReference type="PANTHER" id="PTHR43381">
    <property type="entry name" value="TRANSLATION INITIATION FACTOR IF-2-RELATED"/>
    <property type="match status" value="1"/>
</dbReference>
<dbReference type="Pfam" id="PF22042">
    <property type="entry name" value="EF-G_D2"/>
    <property type="match status" value="1"/>
</dbReference>
<dbReference type="Pfam" id="PF00009">
    <property type="entry name" value="GTP_EFTU"/>
    <property type="match status" value="1"/>
</dbReference>
<dbReference type="Pfam" id="PF03144">
    <property type="entry name" value="GTP_EFTU_D2"/>
    <property type="match status" value="1"/>
</dbReference>
<dbReference type="Pfam" id="PF11987">
    <property type="entry name" value="IF-2"/>
    <property type="match status" value="1"/>
</dbReference>
<dbReference type="Pfam" id="PF04760">
    <property type="entry name" value="IF2_N"/>
    <property type="match status" value="1"/>
</dbReference>
<dbReference type="SUPFAM" id="SSF52156">
    <property type="entry name" value="Initiation factor IF2/eIF5b, domain 3"/>
    <property type="match status" value="1"/>
</dbReference>
<dbReference type="SUPFAM" id="SSF52540">
    <property type="entry name" value="P-loop containing nucleoside triphosphate hydrolases"/>
    <property type="match status" value="1"/>
</dbReference>
<dbReference type="SUPFAM" id="SSF50447">
    <property type="entry name" value="Translation proteins"/>
    <property type="match status" value="2"/>
</dbReference>
<dbReference type="PROSITE" id="PS51722">
    <property type="entry name" value="G_TR_2"/>
    <property type="match status" value="1"/>
</dbReference>
<dbReference type="PROSITE" id="PS01176">
    <property type="entry name" value="IF2"/>
    <property type="match status" value="1"/>
</dbReference>
<reference key="1">
    <citation type="submission" date="2008-12" db="EMBL/GenBank/DDBJ databases">
        <title>Complete sequence of Chloroflexus aggregans DSM 9485.</title>
        <authorList>
            <consortium name="US DOE Joint Genome Institute"/>
            <person name="Lucas S."/>
            <person name="Copeland A."/>
            <person name="Lapidus A."/>
            <person name="Glavina del Rio T."/>
            <person name="Dalin E."/>
            <person name="Tice H."/>
            <person name="Pitluck S."/>
            <person name="Foster B."/>
            <person name="Larimer F."/>
            <person name="Land M."/>
            <person name="Hauser L."/>
            <person name="Kyrpides N."/>
            <person name="Mikhailova N."/>
            <person name="Bryant D.A."/>
            <person name="Richardson P."/>
        </authorList>
    </citation>
    <scope>NUCLEOTIDE SEQUENCE [LARGE SCALE GENOMIC DNA]</scope>
    <source>
        <strain>MD-66 / DSM 9485</strain>
    </source>
</reference>
<comment type="function">
    <text evidence="2">One of the essential components for the initiation of protein synthesis. Protects formylmethionyl-tRNA from spontaneous hydrolysis and promotes its binding to the 30S ribosomal subunits. Also involved in the hydrolysis of GTP during the formation of the 70S ribosomal complex.</text>
</comment>
<comment type="subcellular location">
    <subcellularLocation>
        <location evidence="2">Cytoplasm</location>
    </subcellularLocation>
</comment>
<comment type="similarity">
    <text evidence="2">Belongs to the TRAFAC class translation factor GTPase superfamily. Classic translation factor GTPase family. IF-2 subfamily.</text>
</comment>
<evidence type="ECO:0000250" key="1"/>
<evidence type="ECO:0000255" key="2">
    <source>
        <dbReference type="HAMAP-Rule" id="MF_00100"/>
    </source>
</evidence>
<evidence type="ECO:0000256" key="3">
    <source>
        <dbReference type="SAM" id="MobiDB-lite"/>
    </source>
</evidence>
<proteinExistence type="inferred from homology"/>
<name>IF2_CHLAD</name>
<feature type="chain" id="PRO_1000202765" description="Translation initiation factor IF-2">
    <location>
        <begin position="1"/>
        <end position="753"/>
    </location>
</feature>
<feature type="domain" description="tr-type G">
    <location>
        <begin position="249"/>
        <end position="418"/>
    </location>
</feature>
<feature type="region of interest" description="Disordered" evidence="3">
    <location>
        <begin position="1"/>
        <end position="166"/>
    </location>
</feature>
<feature type="region of interest" description="G1" evidence="1">
    <location>
        <begin position="258"/>
        <end position="265"/>
    </location>
</feature>
<feature type="region of interest" description="G2" evidence="1">
    <location>
        <begin position="283"/>
        <end position="287"/>
    </location>
</feature>
<feature type="region of interest" description="G3" evidence="1">
    <location>
        <begin position="304"/>
        <end position="307"/>
    </location>
</feature>
<feature type="region of interest" description="G4" evidence="1">
    <location>
        <begin position="358"/>
        <end position="361"/>
    </location>
</feature>
<feature type="region of interest" description="G5" evidence="1">
    <location>
        <begin position="394"/>
        <end position="396"/>
    </location>
</feature>
<feature type="compositionally biased region" description="Low complexity" evidence="3">
    <location>
        <begin position="19"/>
        <end position="43"/>
    </location>
</feature>
<feature type="compositionally biased region" description="Low complexity" evidence="3">
    <location>
        <begin position="71"/>
        <end position="81"/>
    </location>
</feature>
<feature type="compositionally biased region" description="Low complexity" evidence="3">
    <location>
        <begin position="102"/>
        <end position="122"/>
    </location>
</feature>
<feature type="compositionally biased region" description="Basic and acidic residues" evidence="3">
    <location>
        <begin position="133"/>
        <end position="146"/>
    </location>
</feature>
<feature type="compositionally biased region" description="Low complexity" evidence="3">
    <location>
        <begin position="153"/>
        <end position="162"/>
    </location>
</feature>
<feature type="binding site" evidence="2">
    <location>
        <begin position="258"/>
        <end position="265"/>
    </location>
    <ligand>
        <name>GTP</name>
        <dbReference type="ChEBI" id="CHEBI:37565"/>
    </ligand>
</feature>
<feature type="binding site" evidence="2">
    <location>
        <begin position="304"/>
        <end position="308"/>
    </location>
    <ligand>
        <name>GTP</name>
        <dbReference type="ChEBI" id="CHEBI:37565"/>
    </ligand>
</feature>
<feature type="binding site" evidence="2">
    <location>
        <begin position="358"/>
        <end position="361"/>
    </location>
    <ligand>
        <name>GTP</name>
        <dbReference type="ChEBI" id="CHEBI:37565"/>
    </ligand>
</feature>